<feature type="chain" id="PRO_0000297318" description="3-methyl-2-oxobutanoate hydroxymethyltransferase">
    <location>
        <begin position="1"/>
        <end position="277"/>
    </location>
</feature>
<feature type="active site" description="Proton acceptor" evidence="1">
    <location>
        <position position="195"/>
    </location>
</feature>
<feature type="binding site" evidence="1">
    <location>
        <begin position="53"/>
        <end position="54"/>
    </location>
    <ligand>
        <name>3-methyl-2-oxobutanoate</name>
        <dbReference type="ChEBI" id="CHEBI:11851"/>
    </ligand>
</feature>
<feature type="binding site" evidence="1">
    <location>
        <position position="53"/>
    </location>
    <ligand>
        <name>Mg(2+)</name>
        <dbReference type="ChEBI" id="CHEBI:18420"/>
    </ligand>
</feature>
<feature type="binding site" evidence="1">
    <location>
        <position position="96"/>
    </location>
    <ligand>
        <name>3-methyl-2-oxobutanoate</name>
        <dbReference type="ChEBI" id="CHEBI:11851"/>
    </ligand>
</feature>
<feature type="binding site" evidence="1">
    <location>
        <position position="96"/>
    </location>
    <ligand>
        <name>Mg(2+)</name>
        <dbReference type="ChEBI" id="CHEBI:18420"/>
    </ligand>
</feature>
<feature type="binding site" evidence="1">
    <location>
        <position position="126"/>
    </location>
    <ligand>
        <name>3-methyl-2-oxobutanoate</name>
        <dbReference type="ChEBI" id="CHEBI:11851"/>
    </ligand>
</feature>
<feature type="binding site" evidence="1">
    <location>
        <position position="128"/>
    </location>
    <ligand>
        <name>Mg(2+)</name>
        <dbReference type="ChEBI" id="CHEBI:18420"/>
    </ligand>
</feature>
<evidence type="ECO:0000255" key="1">
    <source>
        <dbReference type="HAMAP-Rule" id="MF_00156"/>
    </source>
</evidence>
<keyword id="KW-0963">Cytoplasm</keyword>
<keyword id="KW-0460">Magnesium</keyword>
<keyword id="KW-0479">Metal-binding</keyword>
<keyword id="KW-0566">Pantothenate biosynthesis</keyword>
<keyword id="KW-1185">Reference proteome</keyword>
<keyword id="KW-0808">Transferase</keyword>
<name>PANB_CHLL3</name>
<sequence>MNKNSQQKAAHVTTRRLYDMKQNGEKISVLTAYDYTMARILDRAGIDVILVGDSASNVFSGHNTTLPITVDELIYHAKGVVRGVQAETSRAMVVVDMPFMSYQLSPEDALRNAGKIMKEHECDAVKMEGGRTIADTVRRITDAGIPVMGHLGLMPQSIYKYGSYKVRAEDPAEAEELLEDAVTLERSGAFAVVLEKIPAGLAAEISRLLSIPTIGIGAGAECDGQVLVVNDILGLNREFHPRFVRQYADLNTVIEQAVRQYVEDVRSGGFPSVDESY</sequence>
<organism>
    <name type="scientific">Chlorobium luteolum (strain DSM 273 / BCRC 81028 / 2530)</name>
    <name type="common">Pelodictyon luteolum</name>
    <dbReference type="NCBI Taxonomy" id="319225"/>
    <lineage>
        <taxon>Bacteria</taxon>
        <taxon>Pseudomonadati</taxon>
        <taxon>Chlorobiota</taxon>
        <taxon>Chlorobiia</taxon>
        <taxon>Chlorobiales</taxon>
        <taxon>Chlorobiaceae</taxon>
        <taxon>Chlorobium/Pelodictyon group</taxon>
        <taxon>Pelodictyon</taxon>
    </lineage>
</organism>
<protein>
    <recommendedName>
        <fullName evidence="1">3-methyl-2-oxobutanoate hydroxymethyltransferase</fullName>
        <ecNumber evidence="1">2.1.2.11</ecNumber>
    </recommendedName>
    <alternativeName>
        <fullName evidence="1">Ketopantoate hydroxymethyltransferase</fullName>
        <shortName evidence="1">KPHMT</shortName>
    </alternativeName>
</protein>
<comment type="function">
    <text evidence="1">Catalyzes the reversible reaction in which hydroxymethyl group from 5,10-methylenetetrahydrofolate is transferred onto alpha-ketoisovalerate to form ketopantoate.</text>
</comment>
<comment type="catalytic activity">
    <reaction evidence="1">
        <text>3-methyl-2-oxobutanoate + (6R)-5,10-methylene-5,6,7,8-tetrahydrofolate + H2O = 2-dehydropantoate + (6S)-5,6,7,8-tetrahydrofolate</text>
        <dbReference type="Rhea" id="RHEA:11824"/>
        <dbReference type="ChEBI" id="CHEBI:11561"/>
        <dbReference type="ChEBI" id="CHEBI:11851"/>
        <dbReference type="ChEBI" id="CHEBI:15377"/>
        <dbReference type="ChEBI" id="CHEBI:15636"/>
        <dbReference type="ChEBI" id="CHEBI:57453"/>
        <dbReference type="EC" id="2.1.2.11"/>
    </reaction>
</comment>
<comment type="cofactor">
    <cofactor evidence="1">
        <name>Mg(2+)</name>
        <dbReference type="ChEBI" id="CHEBI:18420"/>
    </cofactor>
    <text evidence="1">Binds 1 Mg(2+) ion per subunit.</text>
</comment>
<comment type="pathway">
    <text evidence="1">Cofactor biosynthesis; (R)-pantothenate biosynthesis; (R)-pantoate from 3-methyl-2-oxobutanoate: step 1/2.</text>
</comment>
<comment type="subunit">
    <text evidence="1">Homodecamer; pentamer of dimers.</text>
</comment>
<comment type="subcellular location">
    <subcellularLocation>
        <location evidence="1">Cytoplasm</location>
    </subcellularLocation>
</comment>
<comment type="similarity">
    <text evidence="1">Belongs to the PanB family.</text>
</comment>
<reference key="1">
    <citation type="submission" date="2005-08" db="EMBL/GenBank/DDBJ databases">
        <title>Complete sequence of Pelodictyon luteolum DSM 273.</title>
        <authorList>
            <consortium name="US DOE Joint Genome Institute"/>
            <person name="Copeland A."/>
            <person name="Lucas S."/>
            <person name="Lapidus A."/>
            <person name="Barry K."/>
            <person name="Detter J.C."/>
            <person name="Glavina T."/>
            <person name="Hammon N."/>
            <person name="Israni S."/>
            <person name="Pitluck S."/>
            <person name="Bryant D."/>
            <person name="Schmutz J."/>
            <person name="Larimer F."/>
            <person name="Land M."/>
            <person name="Kyrpides N."/>
            <person name="Ivanova N."/>
            <person name="Richardson P."/>
        </authorList>
    </citation>
    <scope>NUCLEOTIDE SEQUENCE [LARGE SCALE GENOMIC DNA]</scope>
    <source>
        <strain>DSM 273 / BCRC 81028 / 2530</strain>
    </source>
</reference>
<accession>Q3B394</accession>
<dbReference type="EC" id="2.1.2.11" evidence="1"/>
<dbReference type="EMBL" id="CP000096">
    <property type="protein sequence ID" value="ABB24187.1"/>
    <property type="molecule type" value="Genomic_DNA"/>
</dbReference>
<dbReference type="RefSeq" id="WP_011358059.1">
    <property type="nucleotide sequence ID" value="NC_007512.1"/>
</dbReference>
<dbReference type="SMR" id="Q3B394"/>
<dbReference type="STRING" id="319225.Plut_1328"/>
<dbReference type="KEGG" id="plt:Plut_1328"/>
<dbReference type="eggNOG" id="COG0413">
    <property type="taxonomic scope" value="Bacteria"/>
</dbReference>
<dbReference type="HOGENOM" id="CLU_036645_1_0_10"/>
<dbReference type="OrthoDB" id="9781789at2"/>
<dbReference type="UniPathway" id="UPA00028">
    <property type="reaction ID" value="UER00003"/>
</dbReference>
<dbReference type="Proteomes" id="UP000002709">
    <property type="component" value="Chromosome"/>
</dbReference>
<dbReference type="GO" id="GO:0005737">
    <property type="term" value="C:cytoplasm"/>
    <property type="evidence" value="ECO:0007669"/>
    <property type="project" value="UniProtKB-SubCell"/>
</dbReference>
<dbReference type="GO" id="GO:0003864">
    <property type="term" value="F:3-methyl-2-oxobutanoate hydroxymethyltransferase activity"/>
    <property type="evidence" value="ECO:0007669"/>
    <property type="project" value="UniProtKB-UniRule"/>
</dbReference>
<dbReference type="GO" id="GO:0000287">
    <property type="term" value="F:magnesium ion binding"/>
    <property type="evidence" value="ECO:0007669"/>
    <property type="project" value="TreeGrafter"/>
</dbReference>
<dbReference type="GO" id="GO:0015940">
    <property type="term" value="P:pantothenate biosynthetic process"/>
    <property type="evidence" value="ECO:0007669"/>
    <property type="project" value="UniProtKB-UniRule"/>
</dbReference>
<dbReference type="CDD" id="cd06557">
    <property type="entry name" value="KPHMT-like"/>
    <property type="match status" value="1"/>
</dbReference>
<dbReference type="FunFam" id="3.20.20.60:FF:000003">
    <property type="entry name" value="3-methyl-2-oxobutanoate hydroxymethyltransferase"/>
    <property type="match status" value="1"/>
</dbReference>
<dbReference type="Gene3D" id="3.20.20.60">
    <property type="entry name" value="Phosphoenolpyruvate-binding domains"/>
    <property type="match status" value="1"/>
</dbReference>
<dbReference type="HAMAP" id="MF_00156">
    <property type="entry name" value="PanB"/>
    <property type="match status" value="1"/>
</dbReference>
<dbReference type="InterPro" id="IPR003700">
    <property type="entry name" value="Pantoate_hydroxy_MeTrfase"/>
</dbReference>
<dbReference type="InterPro" id="IPR015813">
    <property type="entry name" value="Pyrv/PenolPyrv_kinase-like_dom"/>
</dbReference>
<dbReference type="InterPro" id="IPR040442">
    <property type="entry name" value="Pyrv_kinase-like_dom_sf"/>
</dbReference>
<dbReference type="NCBIfam" id="TIGR00222">
    <property type="entry name" value="panB"/>
    <property type="match status" value="1"/>
</dbReference>
<dbReference type="NCBIfam" id="NF001452">
    <property type="entry name" value="PRK00311.1"/>
    <property type="match status" value="1"/>
</dbReference>
<dbReference type="PANTHER" id="PTHR20881">
    <property type="entry name" value="3-METHYL-2-OXOBUTANOATE HYDROXYMETHYLTRANSFERASE"/>
    <property type="match status" value="1"/>
</dbReference>
<dbReference type="PANTHER" id="PTHR20881:SF0">
    <property type="entry name" value="3-METHYL-2-OXOBUTANOATE HYDROXYMETHYLTRANSFERASE"/>
    <property type="match status" value="1"/>
</dbReference>
<dbReference type="Pfam" id="PF02548">
    <property type="entry name" value="Pantoate_transf"/>
    <property type="match status" value="1"/>
</dbReference>
<dbReference type="PIRSF" id="PIRSF000388">
    <property type="entry name" value="Pantoate_hydroxy_MeTrfase"/>
    <property type="match status" value="1"/>
</dbReference>
<dbReference type="SUPFAM" id="SSF51621">
    <property type="entry name" value="Phosphoenolpyruvate/pyruvate domain"/>
    <property type="match status" value="1"/>
</dbReference>
<proteinExistence type="inferred from homology"/>
<gene>
    <name evidence="1" type="primary">panB</name>
    <name type="ordered locus">Plut_1328</name>
</gene>